<proteinExistence type="inferred from homology"/>
<evidence type="ECO:0000255" key="1">
    <source>
        <dbReference type="HAMAP-Rule" id="MF_00225"/>
    </source>
</evidence>
<evidence type="ECO:0000305" key="2"/>
<organism>
    <name type="scientific">Escherichia coli (strain UTI89 / UPEC)</name>
    <dbReference type="NCBI Taxonomy" id="364106"/>
    <lineage>
        <taxon>Bacteria</taxon>
        <taxon>Pseudomonadati</taxon>
        <taxon>Pseudomonadota</taxon>
        <taxon>Gammaproteobacteria</taxon>
        <taxon>Enterobacterales</taxon>
        <taxon>Enterobacteriaceae</taxon>
        <taxon>Escherichia</taxon>
    </lineage>
</organism>
<sequence>MYYPFVRKALFQLDPERAHEFTFQQLRRITGTPFEALVRQKVPAKPVNCMGLTFKNPLGLAAGLDKDGECIDALGAMGFGSIEIGTVTPRPQPGNDKPRLFRLVDAEGLINRMGFNNLGVDNLVENVKKAHYDGVLGINIGKNKDTPVEQGKDDYLICMEKIYAYAGYIAINISSPNTPGLRTLQYGEALDDLLTAIKNKQNDLQVMHHKYVPIAVKIAPDLSEEELIQVADSLVRHNIDGVIATNTTLDRSLVQGMKNCDQTGGLSGRPLQLKSTEIIRRLSQELNGRLPIIGVGGIDSVIAAREKIAAGASLVQIYSGFIFKGPPLIKEIVTHI</sequence>
<reference key="1">
    <citation type="journal article" date="2006" name="Proc. Natl. Acad. Sci. U.S.A.">
        <title>Identification of genes subject to positive selection in uropathogenic strains of Escherichia coli: a comparative genomics approach.</title>
        <authorList>
            <person name="Chen S.L."/>
            <person name="Hung C.-S."/>
            <person name="Xu J."/>
            <person name="Reigstad C.S."/>
            <person name="Magrini V."/>
            <person name="Sabo A."/>
            <person name="Blasiar D."/>
            <person name="Bieri T."/>
            <person name="Meyer R.R."/>
            <person name="Ozersky P."/>
            <person name="Armstrong J.R."/>
            <person name="Fulton R.S."/>
            <person name="Latreille J.P."/>
            <person name="Spieth J."/>
            <person name="Hooton T.M."/>
            <person name="Mardis E.R."/>
            <person name="Hultgren S.J."/>
            <person name="Gordon J.I."/>
        </authorList>
    </citation>
    <scope>NUCLEOTIDE SEQUENCE [LARGE SCALE GENOMIC DNA]</scope>
    <source>
        <strain>UTI89 / UPEC</strain>
    </source>
</reference>
<gene>
    <name evidence="1" type="primary">pyrD</name>
    <name type="ordered locus">UTI89_C1010</name>
</gene>
<keyword id="KW-1003">Cell membrane</keyword>
<keyword id="KW-0285">Flavoprotein</keyword>
<keyword id="KW-0288">FMN</keyword>
<keyword id="KW-0472">Membrane</keyword>
<keyword id="KW-0560">Oxidoreductase</keyword>
<keyword id="KW-0665">Pyrimidine biosynthesis</keyword>
<feature type="chain" id="PRO_0000336465" description="Dihydroorotate dehydrogenase (quinone)">
    <location>
        <begin position="1"/>
        <end position="336"/>
    </location>
</feature>
<feature type="active site" description="Nucleophile" evidence="1">
    <location>
        <position position="175"/>
    </location>
</feature>
<feature type="binding site" evidence="1">
    <location>
        <begin position="62"/>
        <end position="66"/>
    </location>
    <ligand>
        <name>FMN</name>
        <dbReference type="ChEBI" id="CHEBI:58210"/>
    </ligand>
</feature>
<feature type="binding site" evidence="1">
    <location>
        <position position="66"/>
    </location>
    <ligand>
        <name>substrate</name>
    </ligand>
</feature>
<feature type="binding site" evidence="1">
    <location>
        <position position="86"/>
    </location>
    <ligand>
        <name>FMN</name>
        <dbReference type="ChEBI" id="CHEBI:58210"/>
    </ligand>
</feature>
<feature type="binding site" evidence="1">
    <location>
        <begin position="111"/>
        <end position="115"/>
    </location>
    <ligand>
        <name>substrate</name>
    </ligand>
</feature>
<feature type="binding site" evidence="1">
    <location>
        <position position="139"/>
    </location>
    <ligand>
        <name>FMN</name>
        <dbReference type="ChEBI" id="CHEBI:58210"/>
    </ligand>
</feature>
<feature type="binding site" evidence="1">
    <location>
        <position position="172"/>
    </location>
    <ligand>
        <name>FMN</name>
        <dbReference type="ChEBI" id="CHEBI:58210"/>
    </ligand>
</feature>
<feature type="binding site" evidence="1">
    <location>
        <position position="172"/>
    </location>
    <ligand>
        <name>substrate</name>
    </ligand>
</feature>
<feature type="binding site" evidence="1">
    <location>
        <position position="177"/>
    </location>
    <ligand>
        <name>substrate</name>
    </ligand>
</feature>
<feature type="binding site" evidence="1">
    <location>
        <position position="217"/>
    </location>
    <ligand>
        <name>FMN</name>
        <dbReference type="ChEBI" id="CHEBI:58210"/>
    </ligand>
</feature>
<feature type="binding site" evidence="1">
    <location>
        <position position="245"/>
    </location>
    <ligand>
        <name>FMN</name>
        <dbReference type="ChEBI" id="CHEBI:58210"/>
    </ligand>
</feature>
<feature type="binding site" evidence="1">
    <location>
        <begin position="246"/>
        <end position="247"/>
    </location>
    <ligand>
        <name>substrate</name>
    </ligand>
</feature>
<feature type="binding site" evidence="1">
    <location>
        <position position="268"/>
    </location>
    <ligand>
        <name>FMN</name>
        <dbReference type="ChEBI" id="CHEBI:58210"/>
    </ligand>
</feature>
<feature type="binding site" evidence="1">
    <location>
        <position position="297"/>
    </location>
    <ligand>
        <name>FMN</name>
        <dbReference type="ChEBI" id="CHEBI:58210"/>
    </ligand>
</feature>
<feature type="binding site" evidence="1">
    <location>
        <begin position="318"/>
        <end position="319"/>
    </location>
    <ligand>
        <name>FMN</name>
        <dbReference type="ChEBI" id="CHEBI:58210"/>
    </ligand>
</feature>
<dbReference type="EC" id="1.3.5.2" evidence="1"/>
<dbReference type="EMBL" id="CP000243">
    <property type="protein sequence ID" value="ABE06495.1"/>
    <property type="status" value="ALT_INIT"/>
    <property type="molecule type" value="Genomic_DNA"/>
</dbReference>
<dbReference type="RefSeq" id="WP_001295934.1">
    <property type="nucleotide sequence ID" value="NZ_CP064825.1"/>
</dbReference>
<dbReference type="SMR" id="Q1RDR9"/>
<dbReference type="KEGG" id="eci:UTI89_C1010"/>
<dbReference type="HOGENOM" id="CLU_013640_2_0_6"/>
<dbReference type="UniPathway" id="UPA00070">
    <property type="reaction ID" value="UER00946"/>
</dbReference>
<dbReference type="Proteomes" id="UP000001952">
    <property type="component" value="Chromosome"/>
</dbReference>
<dbReference type="GO" id="GO:0005737">
    <property type="term" value="C:cytoplasm"/>
    <property type="evidence" value="ECO:0007669"/>
    <property type="project" value="InterPro"/>
</dbReference>
<dbReference type="GO" id="GO:0005886">
    <property type="term" value="C:plasma membrane"/>
    <property type="evidence" value="ECO:0007669"/>
    <property type="project" value="UniProtKB-SubCell"/>
</dbReference>
<dbReference type="GO" id="GO:0106430">
    <property type="term" value="F:dihydroorotate dehydrogenase (quinone) activity"/>
    <property type="evidence" value="ECO:0007669"/>
    <property type="project" value="UniProtKB-EC"/>
</dbReference>
<dbReference type="GO" id="GO:0006207">
    <property type="term" value="P:'de novo' pyrimidine nucleobase biosynthetic process"/>
    <property type="evidence" value="ECO:0007669"/>
    <property type="project" value="InterPro"/>
</dbReference>
<dbReference type="GO" id="GO:0044205">
    <property type="term" value="P:'de novo' UMP biosynthetic process"/>
    <property type="evidence" value="ECO:0007669"/>
    <property type="project" value="UniProtKB-UniRule"/>
</dbReference>
<dbReference type="CDD" id="cd04738">
    <property type="entry name" value="DHOD_2_like"/>
    <property type="match status" value="1"/>
</dbReference>
<dbReference type="FunFam" id="3.20.20.70:FF:000028">
    <property type="entry name" value="Dihydroorotate dehydrogenase (quinone)"/>
    <property type="match status" value="1"/>
</dbReference>
<dbReference type="Gene3D" id="3.20.20.70">
    <property type="entry name" value="Aldolase class I"/>
    <property type="match status" value="1"/>
</dbReference>
<dbReference type="HAMAP" id="MF_00225">
    <property type="entry name" value="DHO_dh_type2"/>
    <property type="match status" value="1"/>
</dbReference>
<dbReference type="InterPro" id="IPR013785">
    <property type="entry name" value="Aldolase_TIM"/>
</dbReference>
<dbReference type="InterPro" id="IPR050074">
    <property type="entry name" value="DHO_dehydrogenase"/>
</dbReference>
<dbReference type="InterPro" id="IPR012135">
    <property type="entry name" value="Dihydroorotate_DH_1_2"/>
</dbReference>
<dbReference type="InterPro" id="IPR005719">
    <property type="entry name" value="Dihydroorotate_DH_2"/>
</dbReference>
<dbReference type="InterPro" id="IPR005720">
    <property type="entry name" value="Dihydroorotate_DH_cat"/>
</dbReference>
<dbReference type="InterPro" id="IPR001295">
    <property type="entry name" value="Dihydroorotate_DH_CS"/>
</dbReference>
<dbReference type="NCBIfam" id="NF003644">
    <property type="entry name" value="PRK05286.1-1"/>
    <property type="match status" value="1"/>
</dbReference>
<dbReference type="NCBIfam" id="NF003645">
    <property type="entry name" value="PRK05286.1-2"/>
    <property type="match status" value="1"/>
</dbReference>
<dbReference type="NCBIfam" id="NF003646">
    <property type="entry name" value="PRK05286.1-4"/>
    <property type="match status" value="1"/>
</dbReference>
<dbReference type="NCBIfam" id="NF003652">
    <property type="entry name" value="PRK05286.2-5"/>
    <property type="match status" value="1"/>
</dbReference>
<dbReference type="NCBIfam" id="TIGR01036">
    <property type="entry name" value="pyrD_sub2"/>
    <property type="match status" value="1"/>
</dbReference>
<dbReference type="PANTHER" id="PTHR48109:SF4">
    <property type="entry name" value="DIHYDROOROTATE DEHYDROGENASE (QUINONE), MITOCHONDRIAL"/>
    <property type="match status" value="1"/>
</dbReference>
<dbReference type="PANTHER" id="PTHR48109">
    <property type="entry name" value="DIHYDROOROTATE DEHYDROGENASE (QUINONE), MITOCHONDRIAL-RELATED"/>
    <property type="match status" value="1"/>
</dbReference>
<dbReference type="Pfam" id="PF01180">
    <property type="entry name" value="DHO_dh"/>
    <property type="match status" value="1"/>
</dbReference>
<dbReference type="PIRSF" id="PIRSF000164">
    <property type="entry name" value="DHO_oxidase"/>
    <property type="match status" value="1"/>
</dbReference>
<dbReference type="SUPFAM" id="SSF51395">
    <property type="entry name" value="FMN-linked oxidoreductases"/>
    <property type="match status" value="1"/>
</dbReference>
<dbReference type="PROSITE" id="PS00911">
    <property type="entry name" value="DHODEHASE_1"/>
    <property type="match status" value="1"/>
</dbReference>
<dbReference type="PROSITE" id="PS00912">
    <property type="entry name" value="DHODEHASE_2"/>
    <property type="match status" value="1"/>
</dbReference>
<accession>Q1RDR9</accession>
<comment type="function">
    <text evidence="1">Catalyzes the conversion of dihydroorotate to orotate with quinone as electron acceptor.</text>
</comment>
<comment type="catalytic activity">
    <reaction evidence="1">
        <text>(S)-dihydroorotate + a quinone = orotate + a quinol</text>
        <dbReference type="Rhea" id="RHEA:30187"/>
        <dbReference type="ChEBI" id="CHEBI:24646"/>
        <dbReference type="ChEBI" id="CHEBI:30839"/>
        <dbReference type="ChEBI" id="CHEBI:30864"/>
        <dbReference type="ChEBI" id="CHEBI:132124"/>
        <dbReference type="EC" id="1.3.5.2"/>
    </reaction>
</comment>
<comment type="cofactor">
    <cofactor evidence="1">
        <name>FMN</name>
        <dbReference type="ChEBI" id="CHEBI:58210"/>
    </cofactor>
    <text evidence="1">Binds 1 FMN per subunit.</text>
</comment>
<comment type="pathway">
    <text evidence="1">Pyrimidine metabolism; UMP biosynthesis via de novo pathway; orotate from (S)-dihydroorotate (quinone route): step 1/1.</text>
</comment>
<comment type="subunit">
    <text evidence="1">Monomer.</text>
</comment>
<comment type="subcellular location">
    <subcellularLocation>
        <location evidence="1">Cell membrane</location>
        <topology evidence="1">Peripheral membrane protein</topology>
    </subcellularLocation>
</comment>
<comment type="similarity">
    <text evidence="1">Belongs to the dihydroorotate dehydrogenase family. Type 2 subfamily.</text>
</comment>
<comment type="sequence caution" evidence="2">
    <conflict type="erroneous initiation">
        <sequence resource="EMBL-CDS" id="ABE06495"/>
    </conflict>
</comment>
<protein>
    <recommendedName>
        <fullName evidence="1">Dihydroorotate dehydrogenase (quinone)</fullName>
        <ecNumber evidence="1">1.3.5.2</ecNumber>
    </recommendedName>
    <alternativeName>
        <fullName evidence="1">DHOdehase</fullName>
        <shortName evidence="1">DHOD</shortName>
        <shortName evidence="1">DHODase</shortName>
    </alternativeName>
    <alternativeName>
        <fullName evidence="1">Dihydroorotate oxidase</fullName>
    </alternativeName>
</protein>
<name>PYRD_ECOUT</name>